<comment type="function">
    <text evidence="1">Catalyzes the attachment of threonine to tRNA(Thr) in a two-step reaction: L-threonine is first activated by ATP to form Thr-AMP and then transferred to the acceptor end of tRNA(Thr). Also edits incorrectly charged L-seryl-tRNA(Thr).</text>
</comment>
<comment type="catalytic activity">
    <reaction evidence="1">
        <text>tRNA(Thr) + L-threonine + ATP = L-threonyl-tRNA(Thr) + AMP + diphosphate + H(+)</text>
        <dbReference type="Rhea" id="RHEA:24624"/>
        <dbReference type="Rhea" id="RHEA-COMP:9670"/>
        <dbReference type="Rhea" id="RHEA-COMP:9704"/>
        <dbReference type="ChEBI" id="CHEBI:15378"/>
        <dbReference type="ChEBI" id="CHEBI:30616"/>
        <dbReference type="ChEBI" id="CHEBI:33019"/>
        <dbReference type="ChEBI" id="CHEBI:57926"/>
        <dbReference type="ChEBI" id="CHEBI:78442"/>
        <dbReference type="ChEBI" id="CHEBI:78534"/>
        <dbReference type="ChEBI" id="CHEBI:456215"/>
        <dbReference type="EC" id="6.1.1.3"/>
    </reaction>
</comment>
<comment type="cofactor">
    <cofactor evidence="1">
        <name>Zn(2+)</name>
        <dbReference type="ChEBI" id="CHEBI:29105"/>
    </cofactor>
    <text evidence="1">Binds 1 zinc ion per subunit.</text>
</comment>
<comment type="subunit">
    <text evidence="1">Homodimer.</text>
</comment>
<comment type="subcellular location">
    <subcellularLocation>
        <location evidence="1">Cytoplasm</location>
    </subcellularLocation>
</comment>
<comment type="similarity">
    <text evidence="1">Belongs to the class-II aminoacyl-tRNA synthetase family.</text>
</comment>
<evidence type="ECO:0000255" key="1">
    <source>
        <dbReference type="HAMAP-Rule" id="MF_00184"/>
    </source>
</evidence>
<dbReference type="EC" id="6.1.1.3" evidence="1"/>
<dbReference type="EMBL" id="CP000805">
    <property type="protein sequence ID" value="ACD71254.1"/>
    <property type="molecule type" value="Genomic_DNA"/>
</dbReference>
<dbReference type="SMR" id="B2S475"/>
<dbReference type="KEGG" id="tpp:TPASS_0837"/>
<dbReference type="PATRIC" id="fig|455434.6.peg.826"/>
<dbReference type="Proteomes" id="UP000001202">
    <property type="component" value="Chromosome"/>
</dbReference>
<dbReference type="GO" id="GO:0005737">
    <property type="term" value="C:cytoplasm"/>
    <property type="evidence" value="ECO:0007669"/>
    <property type="project" value="UniProtKB-SubCell"/>
</dbReference>
<dbReference type="GO" id="GO:0005524">
    <property type="term" value="F:ATP binding"/>
    <property type="evidence" value="ECO:0007669"/>
    <property type="project" value="UniProtKB-UniRule"/>
</dbReference>
<dbReference type="GO" id="GO:0046872">
    <property type="term" value="F:metal ion binding"/>
    <property type="evidence" value="ECO:0007669"/>
    <property type="project" value="UniProtKB-KW"/>
</dbReference>
<dbReference type="GO" id="GO:0004829">
    <property type="term" value="F:threonine-tRNA ligase activity"/>
    <property type="evidence" value="ECO:0007669"/>
    <property type="project" value="UniProtKB-UniRule"/>
</dbReference>
<dbReference type="GO" id="GO:0000049">
    <property type="term" value="F:tRNA binding"/>
    <property type="evidence" value="ECO:0007669"/>
    <property type="project" value="UniProtKB-KW"/>
</dbReference>
<dbReference type="GO" id="GO:0006435">
    <property type="term" value="P:threonyl-tRNA aminoacylation"/>
    <property type="evidence" value="ECO:0007669"/>
    <property type="project" value="UniProtKB-UniRule"/>
</dbReference>
<dbReference type="CDD" id="cd00860">
    <property type="entry name" value="ThrRS_anticodon"/>
    <property type="match status" value="1"/>
</dbReference>
<dbReference type="CDD" id="cd00771">
    <property type="entry name" value="ThrRS_core"/>
    <property type="match status" value="1"/>
</dbReference>
<dbReference type="FunFam" id="3.30.54.20:FF:000002">
    <property type="entry name" value="Threonine--tRNA ligase"/>
    <property type="match status" value="1"/>
</dbReference>
<dbReference type="FunFam" id="3.30.930.10:FF:000002">
    <property type="entry name" value="Threonine--tRNA ligase"/>
    <property type="match status" value="1"/>
</dbReference>
<dbReference type="FunFam" id="3.40.50.800:FF:000001">
    <property type="entry name" value="Threonine--tRNA ligase"/>
    <property type="match status" value="1"/>
</dbReference>
<dbReference type="FunFam" id="3.30.980.10:FF:000005">
    <property type="entry name" value="Threonyl-tRNA synthetase, mitochondrial"/>
    <property type="match status" value="1"/>
</dbReference>
<dbReference type="Gene3D" id="3.30.54.20">
    <property type="match status" value="1"/>
</dbReference>
<dbReference type="Gene3D" id="3.40.50.800">
    <property type="entry name" value="Anticodon-binding domain"/>
    <property type="match status" value="1"/>
</dbReference>
<dbReference type="Gene3D" id="3.30.930.10">
    <property type="entry name" value="Bira Bifunctional Protein, Domain 2"/>
    <property type="match status" value="1"/>
</dbReference>
<dbReference type="Gene3D" id="3.30.980.10">
    <property type="entry name" value="Threonyl-trna Synthetase, Chain A, domain 2"/>
    <property type="match status" value="1"/>
</dbReference>
<dbReference type="HAMAP" id="MF_00184">
    <property type="entry name" value="Thr_tRNA_synth"/>
    <property type="match status" value="1"/>
</dbReference>
<dbReference type="InterPro" id="IPR002314">
    <property type="entry name" value="aa-tRNA-synt_IIb"/>
</dbReference>
<dbReference type="InterPro" id="IPR006195">
    <property type="entry name" value="aa-tRNA-synth_II"/>
</dbReference>
<dbReference type="InterPro" id="IPR045864">
    <property type="entry name" value="aa-tRNA-synth_II/BPL/LPL"/>
</dbReference>
<dbReference type="InterPro" id="IPR004154">
    <property type="entry name" value="Anticodon-bd"/>
</dbReference>
<dbReference type="InterPro" id="IPR036621">
    <property type="entry name" value="Anticodon-bd_dom_sf"/>
</dbReference>
<dbReference type="InterPro" id="IPR002320">
    <property type="entry name" value="Thr-tRNA-ligase_IIa"/>
</dbReference>
<dbReference type="InterPro" id="IPR018163">
    <property type="entry name" value="Thr/Ala-tRNA-synth_IIc_edit"/>
</dbReference>
<dbReference type="InterPro" id="IPR047246">
    <property type="entry name" value="ThrRS_anticodon"/>
</dbReference>
<dbReference type="InterPro" id="IPR033728">
    <property type="entry name" value="ThrRS_core"/>
</dbReference>
<dbReference type="InterPro" id="IPR012947">
    <property type="entry name" value="tRNA_SAD"/>
</dbReference>
<dbReference type="NCBIfam" id="TIGR00418">
    <property type="entry name" value="thrS"/>
    <property type="match status" value="1"/>
</dbReference>
<dbReference type="PANTHER" id="PTHR11451:SF44">
    <property type="entry name" value="THREONINE--TRNA LIGASE, CHLOROPLASTIC_MITOCHONDRIAL 2"/>
    <property type="match status" value="1"/>
</dbReference>
<dbReference type="PANTHER" id="PTHR11451">
    <property type="entry name" value="THREONINE-TRNA LIGASE"/>
    <property type="match status" value="1"/>
</dbReference>
<dbReference type="Pfam" id="PF03129">
    <property type="entry name" value="HGTP_anticodon"/>
    <property type="match status" value="1"/>
</dbReference>
<dbReference type="Pfam" id="PF00587">
    <property type="entry name" value="tRNA-synt_2b"/>
    <property type="match status" value="1"/>
</dbReference>
<dbReference type="Pfam" id="PF07973">
    <property type="entry name" value="tRNA_SAD"/>
    <property type="match status" value="1"/>
</dbReference>
<dbReference type="PRINTS" id="PR01047">
    <property type="entry name" value="TRNASYNTHTHR"/>
</dbReference>
<dbReference type="SMART" id="SM00863">
    <property type="entry name" value="tRNA_SAD"/>
    <property type="match status" value="1"/>
</dbReference>
<dbReference type="SUPFAM" id="SSF52954">
    <property type="entry name" value="Class II aaRS ABD-related"/>
    <property type="match status" value="1"/>
</dbReference>
<dbReference type="SUPFAM" id="SSF55681">
    <property type="entry name" value="Class II aaRS and biotin synthetases"/>
    <property type="match status" value="1"/>
</dbReference>
<dbReference type="SUPFAM" id="SSF55186">
    <property type="entry name" value="ThrRS/AlaRS common domain"/>
    <property type="match status" value="1"/>
</dbReference>
<dbReference type="PROSITE" id="PS50862">
    <property type="entry name" value="AA_TRNA_LIGASE_II"/>
    <property type="match status" value="1"/>
</dbReference>
<reference key="1">
    <citation type="journal article" date="2008" name="BMC Microbiol.">
        <title>Complete genome sequence of Treponema pallidum ssp. pallidum strain SS14 determined with oligonucleotide arrays.</title>
        <authorList>
            <person name="Matejkova P."/>
            <person name="Strouhal M."/>
            <person name="Smajs D."/>
            <person name="Norris S.J."/>
            <person name="Palzkill T."/>
            <person name="Petrosino J.F."/>
            <person name="Sodergren E."/>
            <person name="Norton J.E."/>
            <person name="Singh J."/>
            <person name="Richmond T.A."/>
            <person name="Molla M.N."/>
            <person name="Albert T.J."/>
            <person name="Weinstock G.M."/>
        </authorList>
    </citation>
    <scope>NUCLEOTIDE SEQUENCE [LARGE SCALE GENOMIC DNA]</scope>
    <source>
        <strain>SS14</strain>
    </source>
</reference>
<gene>
    <name evidence="1" type="primary">thrS</name>
    <name type="ordered locus">TPASS_0837</name>
</gene>
<sequence length="592" mass="67399">MGLCVEENITMLQKRSDTLDRLRHSLAHVMAEAVQALFPGTKLAVGPPIDYGFYYDFSPPRPLCDADLAPIEEKMRAILRAGCPFVKEVVSRPDALARFKDEPFKQELIERISADDTLSLYHSGAFTDLCRGPHVQSMRDINPHAFKLTSIAGAYWRGNERGPQLTRIYGTAWESEEDLHTYLRMQDEAKRRDHRKLGPALGLFHLDEENPGQVFWHPEGWTLYVAIQQYLRRVMHEDGYAEVHTPFVMPQSLWERSGHWDKYRANMYLTEGEKRSFALKPMNCPGHVEIFKQKTRSYRDLPLRLSEFGSCTRNEPSGSLHGVMRVRGFVQDDAHIFCTEAQIASEVTRFCRLLARVYADFGFAQEQIRVKFSTRPEQRIGDDATWDRAERALAEACEAAGLSYEHAPGEGAFYGPKLEFALIDTLEREWQCGTIQVDYQLPSCERLNAEYVGEDNQRHMPVILHRTVIGSLERFIGILIEHYGGAFPPWLAPVQAVVIPVAPAFLEYAQHVARELCARSLRVQADVSAERMNAKIRTAQTQKVPYLLIVGERELRAQQVAVRPRTGPQHSMGLSAFSTFLLAKLETRALHA</sequence>
<name>SYT_TREPS</name>
<keyword id="KW-0030">Aminoacyl-tRNA synthetase</keyword>
<keyword id="KW-0067">ATP-binding</keyword>
<keyword id="KW-0963">Cytoplasm</keyword>
<keyword id="KW-0436">Ligase</keyword>
<keyword id="KW-0479">Metal-binding</keyword>
<keyword id="KW-0547">Nucleotide-binding</keyword>
<keyword id="KW-0648">Protein biosynthesis</keyword>
<keyword id="KW-0694">RNA-binding</keyword>
<keyword id="KW-0820">tRNA-binding</keyword>
<keyword id="KW-0862">Zinc</keyword>
<organism>
    <name type="scientific">Treponema pallidum subsp. pallidum (strain SS14)</name>
    <dbReference type="NCBI Taxonomy" id="455434"/>
    <lineage>
        <taxon>Bacteria</taxon>
        <taxon>Pseudomonadati</taxon>
        <taxon>Spirochaetota</taxon>
        <taxon>Spirochaetia</taxon>
        <taxon>Spirochaetales</taxon>
        <taxon>Treponemataceae</taxon>
        <taxon>Treponema</taxon>
    </lineage>
</organism>
<accession>B2S475</accession>
<protein>
    <recommendedName>
        <fullName evidence="1">Threonine--tRNA ligase</fullName>
        <ecNumber evidence="1">6.1.1.3</ecNumber>
    </recommendedName>
    <alternativeName>
        <fullName evidence="1">Threonyl-tRNA synthetase</fullName>
        <shortName evidence="1">ThrRS</shortName>
    </alternativeName>
</protein>
<feature type="chain" id="PRO_1000098625" description="Threonine--tRNA ligase">
    <location>
        <begin position="1"/>
        <end position="592"/>
    </location>
</feature>
<feature type="region of interest" description="Catalytic" evidence="1">
    <location>
        <begin position="193"/>
        <end position="488"/>
    </location>
</feature>
<feature type="binding site" evidence="1">
    <location>
        <position position="284"/>
    </location>
    <ligand>
        <name>Zn(2+)</name>
        <dbReference type="ChEBI" id="CHEBI:29105"/>
    </ligand>
</feature>
<feature type="binding site" evidence="1">
    <location>
        <position position="335"/>
    </location>
    <ligand>
        <name>Zn(2+)</name>
        <dbReference type="ChEBI" id="CHEBI:29105"/>
    </ligand>
</feature>
<feature type="binding site" evidence="1">
    <location>
        <position position="465"/>
    </location>
    <ligand>
        <name>Zn(2+)</name>
        <dbReference type="ChEBI" id="CHEBI:29105"/>
    </ligand>
</feature>
<proteinExistence type="inferred from homology"/>